<gene>
    <name evidence="1" type="primary">E1</name>
</gene>
<name>VE1_HPV69</name>
<protein>
    <recommendedName>
        <fullName evidence="1">Replication protein E1</fullName>
        <ecNumber evidence="1">5.6.2.4</ecNumber>
    </recommendedName>
    <alternativeName>
        <fullName evidence="1">ATP-dependent helicase E1</fullName>
    </alternativeName>
    <alternativeName>
        <fullName evidence="1">DNA 3'-5' helicase E1</fullName>
    </alternativeName>
</protein>
<proteinExistence type="inferred from homology"/>
<accession>Q9JH49</accession>
<evidence type="ECO:0000255" key="1">
    <source>
        <dbReference type="HAMAP-Rule" id="MF_04000"/>
    </source>
</evidence>
<evidence type="ECO:0000256" key="2">
    <source>
        <dbReference type="SAM" id="MobiDB-lite"/>
    </source>
</evidence>
<feature type="chain" id="PRO_0000133158" description="Replication protein E1">
    <location>
        <begin position="1"/>
        <end position="634"/>
    </location>
</feature>
<feature type="domain" description="SF3 helicase" evidence="1">
    <location>
        <begin position="437"/>
        <end position="587"/>
    </location>
</feature>
<feature type="region of interest" description="Disordered" evidence="2">
    <location>
        <begin position="91"/>
        <end position="128"/>
    </location>
</feature>
<feature type="region of interest" description="DNA-binding region" evidence="1">
    <location>
        <begin position="172"/>
        <end position="338"/>
    </location>
</feature>
<feature type="short sequence motif" description="Nuclear localization signal" evidence="1">
    <location>
        <begin position="84"/>
        <end position="86"/>
    </location>
</feature>
<feature type="compositionally biased region" description="Polar residues" evidence="2">
    <location>
        <begin position="91"/>
        <end position="115"/>
    </location>
</feature>
<feature type="binding site" evidence="1">
    <location>
        <begin position="463"/>
        <end position="470"/>
    </location>
    <ligand>
        <name>ATP</name>
        <dbReference type="ChEBI" id="CHEBI:30616"/>
    </ligand>
</feature>
<feature type="modified residue" description="Phosphoserine; by host" evidence="1">
    <location>
        <position position="90"/>
    </location>
</feature>
<reference key="1">
    <citation type="journal article" date="2000" name="Clin. Diagn. Lab. Immunol.">
        <title>Molecular cloning and nucleotide sequence analysis of a novel human papillomavirus (type 82) associated with vaginal intraepithelial neoplasia.</title>
        <authorList>
            <person name="Kino N."/>
            <person name="Sata T."/>
            <person name="Sato Y."/>
            <person name="Sugase M."/>
            <person name="Matsukura T."/>
        </authorList>
    </citation>
    <scope>NUCLEOTIDE SEQUENCE [GENOMIC DNA]</scope>
</reference>
<sequence>MDCEGTDGEGLGCTGWFSVEAIVEKHTGETISEDEIEYSSDTGSDLIGFIDDSNISDGAEQQVAQALFQAQETQANKKAVRALKRKLLGSQNSPLQDITNQSNSQQSTDEVNNLQAKRRAVDSVPDSGYGYTEVETLTPVQVDKHNEQNGDSVCSQGGSSGSVSDMEVDIGAQASSVTKICELLKCSNVKAALLSKFKTVYGVSYTELVRVFKSDKTCCSDWVCAAFGVAGSVAESLKTLIQPYCLYYHIQCLTCNWGVLPLMLIRFTCAKNRATIKKCLCTLLNVPDTQLLIEPPKLRSTAVALYFYKTGLSNISETHGDTPEWIVRQTQLEHSFEDTIFDLSKMVQWAFDHDITDDSEIAFKYAQLADIESNAAAFLKSNCQAKYVKDCATMTRHYKRAQKRSMGMSQWLQHRCSKIEDGGTWKDIARFLRYQNVNFIYFLQVLKQFLKGTPKHNCIVIYGPPNTGKSQFAMSFIKFVQGSVISYVNSNSHFWLQPLEDAKVALLDDATYGCWLYIDKYLRNFLDGNPCCIDRKHRSLIQVRCPPLIITSNINPQDDNSLMYLHSRVTVIPFPNTFPFDSNGNPVYELTDVNWKSFFSTTWSRLDLEEDADKENGEPLPAFKCVPGENTRLL</sequence>
<comment type="function">
    <text evidence="1">ATP-dependent DNA 3'-5' helicase required for initiation of viral DNA replication. It forms a complex with the viral E2 protein. The E1-E2 complex binds to the replication origin which contains binding sites for both proteins. During the initial step, a dimer of E1 interacts with a dimer of protein E2 leading to a complex that binds the viral origin of replication with high specificity. Then, a second dimer of E1 displaces the E2 dimer in an ATP-dependent manner to form the E1 tetramer. Following this, two E1 monomers are added to each half of the site, which results in the formation of two E1 trimers on the viral ori. Subsequently, two hexamers will be created. The double hexamer acts as a bi-directional helicase machinery and unwinds the viral DNA and then recruits the host DNA polymerase to start replication.</text>
</comment>
<comment type="catalytic activity">
    <reaction evidence="1">
        <text>Couples ATP hydrolysis with the unwinding of duplex DNA by translocating in the 3'-5' direction.</text>
        <dbReference type="EC" id="5.6.2.4"/>
    </reaction>
</comment>
<comment type="catalytic activity">
    <reaction evidence="1">
        <text>ATP + H2O = ADP + phosphate + H(+)</text>
        <dbReference type="Rhea" id="RHEA:13065"/>
        <dbReference type="ChEBI" id="CHEBI:15377"/>
        <dbReference type="ChEBI" id="CHEBI:15378"/>
        <dbReference type="ChEBI" id="CHEBI:30616"/>
        <dbReference type="ChEBI" id="CHEBI:43474"/>
        <dbReference type="ChEBI" id="CHEBI:456216"/>
        <dbReference type="EC" id="5.6.2.4"/>
    </reaction>
</comment>
<comment type="subunit">
    <text evidence="1">Can form hexamers. Interacts with E2 protein; this interaction increases E1 DNA binding specificity. Interacts with host DNA polymerase subunit POLA2. Interacts with host single stranded DNA-binding protein RPA1. Interacts with host TOP1; this interaction stimulates the enzymatic activity of TOP1.</text>
</comment>
<comment type="subcellular location">
    <subcellularLocation>
        <location evidence="1">Host nucleus</location>
    </subcellularLocation>
</comment>
<comment type="PTM">
    <text evidence="1">Phosphorylated.</text>
</comment>
<comment type="similarity">
    <text evidence="1">Belongs to the papillomaviridae E1 protein family.</text>
</comment>
<organism>
    <name type="scientific">Human papillomavirus 69</name>
    <dbReference type="NCBI Taxonomy" id="37121"/>
    <lineage>
        <taxon>Viruses</taxon>
        <taxon>Monodnaviria</taxon>
        <taxon>Shotokuvirae</taxon>
        <taxon>Cossaviricota</taxon>
        <taxon>Papovaviricetes</taxon>
        <taxon>Zurhausenvirales</taxon>
        <taxon>Papillomaviridae</taxon>
        <taxon>Firstpapillomavirinae</taxon>
        <taxon>Alphapapillomavirus</taxon>
        <taxon>Alphapapillomavirus 5</taxon>
    </lineage>
</organism>
<keyword id="KW-0067">ATP-binding</keyword>
<keyword id="KW-0235">DNA replication</keyword>
<keyword id="KW-0238">DNA-binding</keyword>
<keyword id="KW-0244">Early protein</keyword>
<keyword id="KW-0347">Helicase</keyword>
<keyword id="KW-1048">Host nucleus</keyword>
<keyword id="KW-0378">Hydrolase</keyword>
<keyword id="KW-0413">Isomerase</keyword>
<keyword id="KW-0547">Nucleotide-binding</keyword>
<keyword id="KW-0597">Phosphoprotein</keyword>
<organismHost>
    <name type="scientific">Homo sapiens</name>
    <name type="common">Human</name>
    <dbReference type="NCBI Taxonomy" id="9606"/>
</organismHost>
<dbReference type="EC" id="5.6.2.4" evidence="1"/>
<dbReference type="EMBL" id="AB027020">
    <property type="protein sequence ID" value="BAA90729.1"/>
    <property type="molecule type" value="Genomic_DNA"/>
</dbReference>
<dbReference type="SMR" id="Q9JH49"/>
<dbReference type="Proteomes" id="UP000007674">
    <property type="component" value="Genome"/>
</dbReference>
<dbReference type="GO" id="GO:0042025">
    <property type="term" value="C:host cell nucleus"/>
    <property type="evidence" value="ECO:0007669"/>
    <property type="project" value="UniProtKB-SubCell"/>
</dbReference>
<dbReference type="GO" id="GO:0005524">
    <property type="term" value="F:ATP binding"/>
    <property type="evidence" value="ECO:0007669"/>
    <property type="project" value="UniProtKB-UniRule"/>
</dbReference>
<dbReference type="GO" id="GO:0016887">
    <property type="term" value="F:ATP hydrolysis activity"/>
    <property type="evidence" value="ECO:0007669"/>
    <property type="project" value="RHEA"/>
</dbReference>
<dbReference type="GO" id="GO:0003677">
    <property type="term" value="F:DNA binding"/>
    <property type="evidence" value="ECO:0007669"/>
    <property type="project" value="UniProtKB-UniRule"/>
</dbReference>
<dbReference type="GO" id="GO:0003678">
    <property type="term" value="F:DNA helicase activity"/>
    <property type="evidence" value="ECO:0007669"/>
    <property type="project" value="UniProtKB-UniRule"/>
</dbReference>
<dbReference type="GO" id="GO:0006260">
    <property type="term" value="P:DNA replication"/>
    <property type="evidence" value="ECO:0007669"/>
    <property type="project" value="UniProtKB-UniRule"/>
</dbReference>
<dbReference type="Gene3D" id="3.40.1310.10">
    <property type="match status" value="1"/>
</dbReference>
<dbReference type="Gene3D" id="3.40.50.300">
    <property type="entry name" value="P-loop containing nucleotide triphosphate hydrolases"/>
    <property type="match status" value="1"/>
</dbReference>
<dbReference type="Gene3D" id="1.10.10.510">
    <property type="entry name" value="Zinc finger, large T-antigen D1 domain"/>
    <property type="match status" value="1"/>
</dbReference>
<dbReference type="HAMAP" id="MF_04000">
    <property type="entry name" value="PPV_E1"/>
    <property type="match status" value="1"/>
</dbReference>
<dbReference type="InterPro" id="IPR014015">
    <property type="entry name" value="Helicase_SF3_DNA-vir"/>
</dbReference>
<dbReference type="InterPro" id="IPR027417">
    <property type="entry name" value="P-loop_NTPase"/>
</dbReference>
<dbReference type="InterPro" id="IPR001177">
    <property type="entry name" value="PPV_DNA_helicase_E1_C"/>
</dbReference>
<dbReference type="InterPro" id="IPR014000">
    <property type="entry name" value="PPV_DNA_helicase_E1_N"/>
</dbReference>
<dbReference type="InterPro" id="IPR046832">
    <property type="entry name" value="PPV_E1_DBD"/>
</dbReference>
<dbReference type="InterPro" id="IPR046935">
    <property type="entry name" value="PPV_E1_DBD_sf"/>
</dbReference>
<dbReference type="InterPro" id="IPR016393">
    <property type="entry name" value="Rep_E1_papillomaV"/>
</dbReference>
<dbReference type="InterPro" id="IPR037102">
    <property type="entry name" value="Znf_lg_T-Ag_D1_dom_sf"/>
</dbReference>
<dbReference type="Pfam" id="PF00519">
    <property type="entry name" value="PPV_E1_C"/>
    <property type="match status" value="1"/>
</dbReference>
<dbReference type="Pfam" id="PF20450">
    <property type="entry name" value="PPV_E1_DBD"/>
    <property type="match status" value="1"/>
</dbReference>
<dbReference type="Pfam" id="PF00524">
    <property type="entry name" value="PPV_E1_N"/>
    <property type="match status" value="1"/>
</dbReference>
<dbReference type="PIRSF" id="PIRSF003383">
    <property type="entry name" value="Rep_E1_papillomaV"/>
    <property type="match status" value="1"/>
</dbReference>
<dbReference type="SUPFAM" id="SSF55464">
    <property type="entry name" value="Origin of replication-binding domain, RBD-like"/>
    <property type="match status" value="1"/>
</dbReference>
<dbReference type="SUPFAM" id="SSF52540">
    <property type="entry name" value="P-loop containing nucleoside triphosphate hydrolases"/>
    <property type="match status" value="1"/>
</dbReference>
<dbReference type="PROSITE" id="PS51206">
    <property type="entry name" value="SF3_HELICASE_1"/>
    <property type="match status" value="1"/>
</dbReference>